<protein>
    <recommendedName>
        <fullName evidence="1">3-isopropylmalate dehydratase large subunit</fullName>
        <ecNumber evidence="1">4.2.1.33</ecNumber>
    </recommendedName>
    <alternativeName>
        <fullName evidence="1">Alpha-IPM isomerase</fullName>
        <shortName evidence="1">IPMI</shortName>
    </alternativeName>
    <alternativeName>
        <fullName evidence="1">Isopropylmalate isomerase</fullName>
    </alternativeName>
</protein>
<comment type="function">
    <text evidence="1">Catalyzes the isomerization between 2-isopropylmalate and 3-isopropylmalate, via the formation of 2-isopropylmaleate.</text>
</comment>
<comment type="catalytic activity">
    <reaction evidence="1">
        <text>(2R,3S)-3-isopropylmalate = (2S)-2-isopropylmalate</text>
        <dbReference type="Rhea" id="RHEA:32287"/>
        <dbReference type="ChEBI" id="CHEBI:1178"/>
        <dbReference type="ChEBI" id="CHEBI:35121"/>
        <dbReference type="EC" id="4.2.1.33"/>
    </reaction>
</comment>
<comment type="cofactor">
    <cofactor evidence="1">
        <name>[4Fe-4S] cluster</name>
        <dbReference type="ChEBI" id="CHEBI:49883"/>
    </cofactor>
    <text evidence="1">Binds 1 [4Fe-4S] cluster per subunit.</text>
</comment>
<comment type="pathway">
    <text evidence="1">Amino-acid biosynthesis; L-leucine biosynthesis; L-leucine from 3-methyl-2-oxobutanoate: step 2/4.</text>
</comment>
<comment type="subunit">
    <text evidence="1">Heterodimer of LeuC and LeuD.</text>
</comment>
<comment type="similarity">
    <text evidence="1">Belongs to the aconitase/IPM isomerase family. LeuC type 1 subfamily.</text>
</comment>
<organism>
    <name type="scientific">Glaesserella parasuis serovar 5 (strain SH0165)</name>
    <name type="common">Haemophilus parasuis</name>
    <dbReference type="NCBI Taxonomy" id="557723"/>
    <lineage>
        <taxon>Bacteria</taxon>
        <taxon>Pseudomonadati</taxon>
        <taxon>Pseudomonadota</taxon>
        <taxon>Gammaproteobacteria</taxon>
        <taxon>Pasteurellales</taxon>
        <taxon>Pasteurellaceae</taxon>
        <taxon>Glaesserella</taxon>
    </lineage>
</organism>
<accession>B8F3W8</accession>
<proteinExistence type="inferred from homology"/>
<sequence>MKKTLYEKLFDAHVVHEAEGETPLIYINRHLVHEVTSPQAFDGLRAMGREVRQPTKTVATMDHNVPTDSRDLGGSGEMGRIQMVELAKNTEQFGVTLYDINHINQGIVHVMGPEQGLTLPGMTIVCGDSHTATHGAFGALAFGIGTSEVEHVLATQTVKQARAKKMKIEVRGKVREGITAKDIVLAIIGKTTMAGGTGHVVEFCGEAIRDLSMEGRMTVCNMAIELGAKSGLIAPDETTFAYLKDRPSAPKGKDWDDAVAYWKTLHTDEGAEFDTVVTLEASEIEPQVTWGTNPGHVIGINETIPNPADMADPIERQSAEKALAYMGLPHSIKLTDVAIDKVFIGSCTNSRIEDLRAAAAVAKGRKVADGVQALVVPGSGLVREQAEKEGLDKIFIEAGFEWRQPGCSMCLAMNNDRLEPGERCASTSNRNFEGRQGRGGRTHLVSPAMAAAAAVHGKFVDIRNVELH</sequence>
<keyword id="KW-0004">4Fe-4S</keyword>
<keyword id="KW-0028">Amino-acid biosynthesis</keyword>
<keyword id="KW-0100">Branched-chain amino acid biosynthesis</keyword>
<keyword id="KW-0408">Iron</keyword>
<keyword id="KW-0411">Iron-sulfur</keyword>
<keyword id="KW-0432">Leucine biosynthesis</keyword>
<keyword id="KW-0456">Lyase</keyword>
<keyword id="KW-0479">Metal-binding</keyword>
<keyword id="KW-1185">Reference proteome</keyword>
<dbReference type="EC" id="4.2.1.33" evidence="1"/>
<dbReference type="EMBL" id="CP001321">
    <property type="protein sequence ID" value="ACL32020.1"/>
    <property type="molecule type" value="Genomic_DNA"/>
</dbReference>
<dbReference type="RefSeq" id="WP_005713660.1">
    <property type="nucleotide sequence ID" value="NC_011852.1"/>
</dbReference>
<dbReference type="SMR" id="B8F3W8"/>
<dbReference type="STRING" id="557723.HAPS_0336"/>
<dbReference type="GeneID" id="66618771"/>
<dbReference type="KEGG" id="hap:HAPS_0336"/>
<dbReference type="HOGENOM" id="CLU_006714_3_4_6"/>
<dbReference type="UniPathway" id="UPA00048">
    <property type="reaction ID" value="UER00071"/>
</dbReference>
<dbReference type="Proteomes" id="UP000006743">
    <property type="component" value="Chromosome"/>
</dbReference>
<dbReference type="GO" id="GO:0003861">
    <property type="term" value="F:3-isopropylmalate dehydratase activity"/>
    <property type="evidence" value="ECO:0007669"/>
    <property type="project" value="UniProtKB-UniRule"/>
</dbReference>
<dbReference type="GO" id="GO:0051539">
    <property type="term" value="F:4 iron, 4 sulfur cluster binding"/>
    <property type="evidence" value="ECO:0007669"/>
    <property type="project" value="UniProtKB-KW"/>
</dbReference>
<dbReference type="GO" id="GO:0046872">
    <property type="term" value="F:metal ion binding"/>
    <property type="evidence" value="ECO:0007669"/>
    <property type="project" value="UniProtKB-KW"/>
</dbReference>
<dbReference type="GO" id="GO:0009098">
    <property type="term" value="P:L-leucine biosynthetic process"/>
    <property type="evidence" value="ECO:0007669"/>
    <property type="project" value="UniProtKB-UniRule"/>
</dbReference>
<dbReference type="CDD" id="cd01583">
    <property type="entry name" value="IPMI"/>
    <property type="match status" value="1"/>
</dbReference>
<dbReference type="FunFam" id="3.30.499.10:FF:000006">
    <property type="entry name" value="3-isopropylmalate dehydratase large subunit"/>
    <property type="match status" value="1"/>
</dbReference>
<dbReference type="FunFam" id="3.30.499.10:FF:000007">
    <property type="entry name" value="3-isopropylmalate dehydratase large subunit"/>
    <property type="match status" value="1"/>
</dbReference>
<dbReference type="Gene3D" id="3.30.499.10">
    <property type="entry name" value="Aconitase, domain 3"/>
    <property type="match status" value="2"/>
</dbReference>
<dbReference type="HAMAP" id="MF_01026">
    <property type="entry name" value="LeuC_type1"/>
    <property type="match status" value="1"/>
</dbReference>
<dbReference type="InterPro" id="IPR004430">
    <property type="entry name" value="3-IsopropMal_deHydase_lsu"/>
</dbReference>
<dbReference type="InterPro" id="IPR015931">
    <property type="entry name" value="Acnase/IPM_dHydase_lsu_aba_1/3"/>
</dbReference>
<dbReference type="InterPro" id="IPR001030">
    <property type="entry name" value="Acoase/IPM_deHydtase_lsu_aba"/>
</dbReference>
<dbReference type="InterPro" id="IPR018136">
    <property type="entry name" value="Aconitase_4Fe-4S_BS"/>
</dbReference>
<dbReference type="InterPro" id="IPR036008">
    <property type="entry name" value="Aconitase_4Fe-4S_dom"/>
</dbReference>
<dbReference type="InterPro" id="IPR050067">
    <property type="entry name" value="IPM_dehydratase_rel_enz"/>
</dbReference>
<dbReference type="InterPro" id="IPR033941">
    <property type="entry name" value="IPMI_cat"/>
</dbReference>
<dbReference type="NCBIfam" id="TIGR00170">
    <property type="entry name" value="leuC"/>
    <property type="match status" value="1"/>
</dbReference>
<dbReference type="NCBIfam" id="NF004016">
    <property type="entry name" value="PRK05478.1"/>
    <property type="match status" value="1"/>
</dbReference>
<dbReference type="NCBIfam" id="NF009116">
    <property type="entry name" value="PRK12466.1"/>
    <property type="match status" value="1"/>
</dbReference>
<dbReference type="PANTHER" id="PTHR43822:SF9">
    <property type="entry name" value="3-ISOPROPYLMALATE DEHYDRATASE"/>
    <property type="match status" value="1"/>
</dbReference>
<dbReference type="PANTHER" id="PTHR43822">
    <property type="entry name" value="HOMOACONITASE, MITOCHONDRIAL-RELATED"/>
    <property type="match status" value="1"/>
</dbReference>
<dbReference type="Pfam" id="PF00330">
    <property type="entry name" value="Aconitase"/>
    <property type="match status" value="1"/>
</dbReference>
<dbReference type="PRINTS" id="PR00415">
    <property type="entry name" value="ACONITASE"/>
</dbReference>
<dbReference type="SUPFAM" id="SSF53732">
    <property type="entry name" value="Aconitase iron-sulfur domain"/>
    <property type="match status" value="1"/>
</dbReference>
<dbReference type="PROSITE" id="PS00450">
    <property type="entry name" value="ACONITASE_1"/>
    <property type="match status" value="1"/>
</dbReference>
<dbReference type="PROSITE" id="PS01244">
    <property type="entry name" value="ACONITASE_2"/>
    <property type="match status" value="1"/>
</dbReference>
<gene>
    <name evidence="1" type="primary">leuC</name>
    <name type="ordered locus">HAPS_0336</name>
</gene>
<evidence type="ECO:0000255" key="1">
    <source>
        <dbReference type="HAMAP-Rule" id="MF_01026"/>
    </source>
</evidence>
<name>LEUC_GLAP5</name>
<feature type="chain" id="PRO_1000149364" description="3-isopropylmalate dehydratase large subunit">
    <location>
        <begin position="1"/>
        <end position="468"/>
    </location>
</feature>
<feature type="binding site" evidence="1">
    <location>
        <position position="347"/>
    </location>
    <ligand>
        <name>[4Fe-4S] cluster</name>
        <dbReference type="ChEBI" id="CHEBI:49883"/>
    </ligand>
</feature>
<feature type="binding site" evidence="1">
    <location>
        <position position="407"/>
    </location>
    <ligand>
        <name>[4Fe-4S] cluster</name>
        <dbReference type="ChEBI" id="CHEBI:49883"/>
    </ligand>
</feature>
<feature type="binding site" evidence="1">
    <location>
        <position position="410"/>
    </location>
    <ligand>
        <name>[4Fe-4S] cluster</name>
        <dbReference type="ChEBI" id="CHEBI:49883"/>
    </ligand>
</feature>
<reference key="1">
    <citation type="journal article" date="2009" name="J. Bacteriol.">
        <title>Complete genome sequence of Haemophilus parasuis SH0165.</title>
        <authorList>
            <person name="Yue M."/>
            <person name="Yang F."/>
            <person name="Yang J."/>
            <person name="Bei W."/>
            <person name="Cai X."/>
            <person name="Chen L."/>
            <person name="Dong J."/>
            <person name="Zhou R."/>
            <person name="Jin M."/>
            <person name="Jin Q."/>
            <person name="Chen H."/>
        </authorList>
    </citation>
    <scope>NUCLEOTIDE SEQUENCE [LARGE SCALE GENOMIC DNA]</scope>
    <source>
        <strain>SH0165</strain>
    </source>
</reference>